<feature type="chain" id="PRO_1000115525" description="Trigger factor">
    <location>
        <begin position="1"/>
        <end position="442"/>
    </location>
</feature>
<feature type="domain" description="PPIase FKBP-type" evidence="1">
    <location>
        <begin position="165"/>
        <end position="250"/>
    </location>
</feature>
<reference key="1">
    <citation type="journal article" date="2009" name="Infect. Immun.">
        <title>Comparative genomics reveal extensive transposon-mediated genomic plasticity and diversity among potential effector proteins within the genus Coxiella.</title>
        <authorList>
            <person name="Beare P.A."/>
            <person name="Unsworth N."/>
            <person name="Andoh M."/>
            <person name="Voth D.E."/>
            <person name="Omsland A."/>
            <person name="Gilk S.D."/>
            <person name="Williams K.P."/>
            <person name="Sobral B.W."/>
            <person name="Kupko J.J. III"/>
            <person name="Porcella S.F."/>
            <person name="Samuel J.E."/>
            <person name="Heinzen R.A."/>
        </authorList>
    </citation>
    <scope>NUCLEOTIDE SEQUENCE [LARGE SCALE GENOMIC DNA]</scope>
    <source>
        <strain>CbuG_Q212</strain>
    </source>
</reference>
<organism>
    <name type="scientific">Coxiella burnetii (strain CbuG_Q212)</name>
    <name type="common">Coxiella burnetii (strain Q212)</name>
    <dbReference type="NCBI Taxonomy" id="434923"/>
    <lineage>
        <taxon>Bacteria</taxon>
        <taxon>Pseudomonadati</taxon>
        <taxon>Pseudomonadota</taxon>
        <taxon>Gammaproteobacteria</taxon>
        <taxon>Legionellales</taxon>
        <taxon>Coxiellaceae</taxon>
        <taxon>Coxiella</taxon>
    </lineage>
</organism>
<proteinExistence type="inferred from homology"/>
<comment type="function">
    <text evidence="1">Involved in protein export. Acts as a chaperone by maintaining the newly synthesized protein in an open conformation. Functions as a peptidyl-prolyl cis-trans isomerase.</text>
</comment>
<comment type="catalytic activity">
    <reaction evidence="1">
        <text>[protein]-peptidylproline (omega=180) = [protein]-peptidylproline (omega=0)</text>
        <dbReference type="Rhea" id="RHEA:16237"/>
        <dbReference type="Rhea" id="RHEA-COMP:10747"/>
        <dbReference type="Rhea" id="RHEA-COMP:10748"/>
        <dbReference type="ChEBI" id="CHEBI:83833"/>
        <dbReference type="ChEBI" id="CHEBI:83834"/>
        <dbReference type="EC" id="5.2.1.8"/>
    </reaction>
</comment>
<comment type="subcellular location">
    <subcellularLocation>
        <location>Cytoplasm</location>
    </subcellularLocation>
    <text evidence="1">About half TF is bound to the ribosome near the polypeptide exit tunnel while the other half is free in the cytoplasm.</text>
</comment>
<comment type="domain">
    <text evidence="1">Consists of 3 domains; the N-terminus binds the ribosome, the middle domain has PPIase activity, while the C-terminus has intrinsic chaperone activity on its own.</text>
</comment>
<comment type="similarity">
    <text evidence="1">Belongs to the FKBP-type PPIase family. Tig subfamily.</text>
</comment>
<accession>B6J0W1</accession>
<evidence type="ECO:0000255" key="1">
    <source>
        <dbReference type="HAMAP-Rule" id="MF_00303"/>
    </source>
</evidence>
<dbReference type="EC" id="5.2.1.8" evidence="1"/>
<dbReference type="EMBL" id="CP001019">
    <property type="protein sequence ID" value="ACJ18589.1"/>
    <property type="molecule type" value="Genomic_DNA"/>
</dbReference>
<dbReference type="RefSeq" id="WP_012570186.1">
    <property type="nucleotide sequence ID" value="NC_011527.1"/>
</dbReference>
<dbReference type="SMR" id="B6J0W1"/>
<dbReference type="KEGG" id="cbg:CbuG_1266"/>
<dbReference type="HOGENOM" id="CLU_033058_2_0_6"/>
<dbReference type="GO" id="GO:0005737">
    <property type="term" value="C:cytoplasm"/>
    <property type="evidence" value="ECO:0007669"/>
    <property type="project" value="UniProtKB-SubCell"/>
</dbReference>
<dbReference type="GO" id="GO:0003755">
    <property type="term" value="F:peptidyl-prolyl cis-trans isomerase activity"/>
    <property type="evidence" value="ECO:0007669"/>
    <property type="project" value="UniProtKB-UniRule"/>
</dbReference>
<dbReference type="GO" id="GO:0044183">
    <property type="term" value="F:protein folding chaperone"/>
    <property type="evidence" value="ECO:0007669"/>
    <property type="project" value="TreeGrafter"/>
</dbReference>
<dbReference type="GO" id="GO:0043022">
    <property type="term" value="F:ribosome binding"/>
    <property type="evidence" value="ECO:0007669"/>
    <property type="project" value="TreeGrafter"/>
</dbReference>
<dbReference type="GO" id="GO:0051083">
    <property type="term" value="P:'de novo' cotranslational protein folding"/>
    <property type="evidence" value="ECO:0007669"/>
    <property type="project" value="TreeGrafter"/>
</dbReference>
<dbReference type="GO" id="GO:0051301">
    <property type="term" value="P:cell division"/>
    <property type="evidence" value="ECO:0007669"/>
    <property type="project" value="UniProtKB-KW"/>
</dbReference>
<dbReference type="GO" id="GO:0061077">
    <property type="term" value="P:chaperone-mediated protein folding"/>
    <property type="evidence" value="ECO:0007669"/>
    <property type="project" value="TreeGrafter"/>
</dbReference>
<dbReference type="GO" id="GO:0015031">
    <property type="term" value="P:protein transport"/>
    <property type="evidence" value="ECO:0007669"/>
    <property type="project" value="UniProtKB-UniRule"/>
</dbReference>
<dbReference type="GO" id="GO:0043335">
    <property type="term" value="P:protein unfolding"/>
    <property type="evidence" value="ECO:0007669"/>
    <property type="project" value="TreeGrafter"/>
</dbReference>
<dbReference type="FunFam" id="3.10.50.40:FF:000001">
    <property type="entry name" value="Trigger factor"/>
    <property type="match status" value="1"/>
</dbReference>
<dbReference type="Gene3D" id="3.10.50.40">
    <property type="match status" value="1"/>
</dbReference>
<dbReference type="Gene3D" id="3.30.70.1050">
    <property type="entry name" value="Trigger factor ribosome-binding domain"/>
    <property type="match status" value="1"/>
</dbReference>
<dbReference type="Gene3D" id="1.10.3120.10">
    <property type="entry name" value="Trigger factor, C-terminal domain"/>
    <property type="match status" value="1"/>
</dbReference>
<dbReference type="HAMAP" id="MF_00303">
    <property type="entry name" value="Trigger_factor_Tig"/>
    <property type="match status" value="1"/>
</dbReference>
<dbReference type="InterPro" id="IPR046357">
    <property type="entry name" value="PPIase_dom_sf"/>
</dbReference>
<dbReference type="InterPro" id="IPR001179">
    <property type="entry name" value="PPIase_FKBP_dom"/>
</dbReference>
<dbReference type="InterPro" id="IPR005215">
    <property type="entry name" value="Trig_fac"/>
</dbReference>
<dbReference type="InterPro" id="IPR008880">
    <property type="entry name" value="Trigger_fac_C"/>
</dbReference>
<dbReference type="InterPro" id="IPR037041">
    <property type="entry name" value="Trigger_fac_C_sf"/>
</dbReference>
<dbReference type="InterPro" id="IPR008881">
    <property type="entry name" value="Trigger_fac_ribosome-bd_bac"/>
</dbReference>
<dbReference type="InterPro" id="IPR036611">
    <property type="entry name" value="Trigger_fac_ribosome-bd_sf"/>
</dbReference>
<dbReference type="InterPro" id="IPR027304">
    <property type="entry name" value="Trigger_fact/SurA_dom_sf"/>
</dbReference>
<dbReference type="NCBIfam" id="TIGR00115">
    <property type="entry name" value="tig"/>
    <property type="match status" value="1"/>
</dbReference>
<dbReference type="PANTHER" id="PTHR30560">
    <property type="entry name" value="TRIGGER FACTOR CHAPERONE AND PEPTIDYL-PROLYL CIS/TRANS ISOMERASE"/>
    <property type="match status" value="1"/>
</dbReference>
<dbReference type="PANTHER" id="PTHR30560:SF3">
    <property type="entry name" value="TRIGGER FACTOR-LIKE PROTEIN TIG, CHLOROPLASTIC"/>
    <property type="match status" value="1"/>
</dbReference>
<dbReference type="Pfam" id="PF00254">
    <property type="entry name" value="FKBP_C"/>
    <property type="match status" value="1"/>
</dbReference>
<dbReference type="Pfam" id="PF05698">
    <property type="entry name" value="Trigger_C"/>
    <property type="match status" value="1"/>
</dbReference>
<dbReference type="Pfam" id="PF05697">
    <property type="entry name" value="Trigger_N"/>
    <property type="match status" value="1"/>
</dbReference>
<dbReference type="PIRSF" id="PIRSF003095">
    <property type="entry name" value="Trigger_factor"/>
    <property type="match status" value="1"/>
</dbReference>
<dbReference type="SUPFAM" id="SSF54534">
    <property type="entry name" value="FKBP-like"/>
    <property type="match status" value="1"/>
</dbReference>
<dbReference type="SUPFAM" id="SSF109998">
    <property type="entry name" value="Triger factor/SurA peptide-binding domain-like"/>
    <property type="match status" value="1"/>
</dbReference>
<dbReference type="SUPFAM" id="SSF102735">
    <property type="entry name" value="Trigger factor ribosome-binding domain"/>
    <property type="match status" value="1"/>
</dbReference>
<dbReference type="PROSITE" id="PS50059">
    <property type="entry name" value="FKBP_PPIASE"/>
    <property type="match status" value="1"/>
</dbReference>
<name>TIG_COXB2</name>
<sequence length="442" mass="50173">MRGNFMSSIEKLGGLKQRLTITVPAEEVDKAYKSRLLKVARTAKIPKFRPGKASPAVVEKLYGKAILQEVGSELIQSSLREAVEEHQLQVAGAPDIKMDKILRGEPFKYVVNFEVYPEITLESLAGETIERTQVEITEEDLDKMLEALRKQYAEWKEVDRPAKADDRVIIDFEGTLDGKPFERGSAKDFQLELGSKRMIAGFEEGIEGMKPGESKALDITFPADYPSEDLAGKAAVFNITLQKVMAPELPVLDEQFAERLGIKEGGLEALRQKVRTNMEKEVHHHMENKLKMAVLDKLIERNPIEVPESLIEAEIDHLQQMTRQQVAMQTHKPDEAKKMELPRDPYREQATKRVKLGLLLAEVVKQHKIKADPEQLRARVEEVAASYQDPEKVISWYYSNKQMLSEIESVVLEDQAVAQLMSELEVKDQAIPYEEAVKQIQQ</sequence>
<keyword id="KW-0131">Cell cycle</keyword>
<keyword id="KW-0132">Cell division</keyword>
<keyword id="KW-0143">Chaperone</keyword>
<keyword id="KW-0963">Cytoplasm</keyword>
<keyword id="KW-0413">Isomerase</keyword>
<keyword id="KW-0697">Rotamase</keyword>
<gene>
    <name evidence="1" type="primary">tig</name>
    <name type="ordered locus">CbuG_1266</name>
</gene>
<protein>
    <recommendedName>
        <fullName evidence="1">Trigger factor</fullName>
        <shortName evidence="1">TF</shortName>
        <ecNumber evidence="1">5.2.1.8</ecNumber>
    </recommendedName>
    <alternativeName>
        <fullName evidence="1">PPIase</fullName>
    </alternativeName>
</protein>